<proteinExistence type="inferred from homology"/>
<sequence>MNPIVINRLQRKLGYTFNHQELLQQALTHRSASSKHNERLEFLGDSILSYVIANALYHRFPRVDEGDMSRMRATLVRGNTLAELAREFELGECLRLGPGELKSGGFRRESILADTVEALIGGVFLDSDIQTVEKLILNWYQTRLDEISPGDKQKDPKTRLQEYLQGRHLPLPTYLVVQVRGEAHDQEFTIHCQVSGLSEPVVGTGSSRRKAEQAAAEQALKKLELE</sequence>
<organism>
    <name type="scientific">Shigella boydii serotype 18 (strain CDC 3083-94 / BS512)</name>
    <dbReference type="NCBI Taxonomy" id="344609"/>
    <lineage>
        <taxon>Bacteria</taxon>
        <taxon>Pseudomonadati</taxon>
        <taxon>Pseudomonadota</taxon>
        <taxon>Gammaproteobacteria</taxon>
        <taxon>Enterobacterales</taxon>
        <taxon>Enterobacteriaceae</taxon>
        <taxon>Shigella</taxon>
    </lineage>
</organism>
<evidence type="ECO:0000255" key="1">
    <source>
        <dbReference type="HAMAP-Rule" id="MF_00104"/>
    </source>
</evidence>
<comment type="function">
    <text evidence="1">Digests double-stranded RNA. Involved in the processing of primary rRNA transcript to yield the immediate precursors to the large and small rRNAs (23S and 16S). Processes some mRNAs, and tRNAs when they are encoded in the rRNA operon. Processes pre-crRNA and tracrRNA of type II CRISPR loci if present in the organism.</text>
</comment>
<comment type="catalytic activity">
    <reaction evidence="1">
        <text>Endonucleolytic cleavage to 5'-phosphomonoester.</text>
        <dbReference type="EC" id="3.1.26.3"/>
    </reaction>
</comment>
<comment type="cofactor">
    <cofactor evidence="1">
        <name>Mg(2+)</name>
        <dbReference type="ChEBI" id="CHEBI:18420"/>
    </cofactor>
</comment>
<comment type="subunit">
    <text evidence="1">Homodimer.</text>
</comment>
<comment type="subcellular location">
    <subcellularLocation>
        <location evidence="1">Cytoplasm</location>
    </subcellularLocation>
</comment>
<comment type="similarity">
    <text evidence="1">Belongs to the ribonuclease III family.</text>
</comment>
<feature type="chain" id="PRO_1000094133" description="Ribonuclease 3">
    <location>
        <begin position="1"/>
        <end position="226"/>
    </location>
</feature>
<feature type="domain" description="RNase III" evidence="1">
    <location>
        <begin position="6"/>
        <end position="128"/>
    </location>
</feature>
<feature type="domain" description="DRBM" evidence="1">
    <location>
        <begin position="155"/>
        <end position="225"/>
    </location>
</feature>
<feature type="active site" evidence="1">
    <location>
        <position position="45"/>
    </location>
</feature>
<feature type="active site" evidence="1">
    <location>
        <position position="117"/>
    </location>
</feature>
<feature type="binding site" evidence="1">
    <location>
        <position position="41"/>
    </location>
    <ligand>
        <name>Mg(2+)</name>
        <dbReference type="ChEBI" id="CHEBI:18420"/>
    </ligand>
</feature>
<feature type="binding site" evidence="1">
    <location>
        <position position="114"/>
    </location>
    <ligand>
        <name>Mg(2+)</name>
        <dbReference type="ChEBI" id="CHEBI:18420"/>
    </ligand>
</feature>
<feature type="binding site" evidence="1">
    <location>
        <position position="117"/>
    </location>
    <ligand>
        <name>Mg(2+)</name>
        <dbReference type="ChEBI" id="CHEBI:18420"/>
    </ligand>
</feature>
<gene>
    <name evidence="1" type="primary">rnc</name>
    <name type="ordered locus">SbBS512_E2932</name>
</gene>
<keyword id="KW-0963">Cytoplasm</keyword>
<keyword id="KW-0255">Endonuclease</keyword>
<keyword id="KW-0378">Hydrolase</keyword>
<keyword id="KW-0460">Magnesium</keyword>
<keyword id="KW-0479">Metal-binding</keyword>
<keyword id="KW-0507">mRNA processing</keyword>
<keyword id="KW-0540">Nuclease</keyword>
<keyword id="KW-1185">Reference proteome</keyword>
<keyword id="KW-0694">RNA-binding</keyword>
<keyword id="KW-0698">rRNA processing</keyword>
<keyword id="KW-0699">rRNA-binding</keyword>
<keyword id="KW-0819">tRNA processing</keyword>
<dbReference type="EC" id="3.1.26.3" evidence="1"/>
<dbReference type="EMBL" id="CP001063">
    <property type="protein sequence ID" value="ACD09061.1"/>
    <property type="molecule type" value="Genomic_DNA"/>
</dbReference>
<dbReference type="RefSeq" id="WP_001068343.1">
    <property type="nucleotide sequence ID" value="NC_010658.1"/>
</dbReference>
<dbReference type="SMR" id="B2TXY0"/>
<dbReference type="STRING" id="344609.SbBS512_E2932"/>
<dbReference type="GeneID" id="93774524"/>
<dbReference type="KEGG" id="sbc:SbBS512_E2932"/>
<dbReference type="HOGENOM" id="CLU_000907_1_1_6"/>
<dbReference type="Proteomes" id="UP000001030">
    <property type="component" value="Chromosome"/>
</dbReference>
<dbReference type="GO" id="GO:0005737">
    <property type="term" value="C:cytoplasm"/>
    <property type="evidence" value="ECO:0007669"/>
    <property type="project" value="UniProtKB-SubCell"/>
</dbReference>
<dbReference type="GO" id="GO:0003725">
    <property type="term" value="F:double-stranded RNA binding"/>
    <property type="evidence" value="ECO:0007669"/>
    <property type="project" value="TreeGrafter"/>
</dbReference>
<dbReference type="GO" id="GO:0046872">
    <property type="term" value="F:metal ion binding"/>
    <property type="evidence" value="ECO:0007669"/>
    <property type="project" value="UniProtKB-KW"/>
</dbReference>
<dbReference type="GO" id="GO:0004525">
    <property type="term" value="F:ribonuclease III activity"/>
    <property type="evidence" value="ECO:0007669"/>
    <property type="project" value="UniProtKB-UniRule"/>
</dbReference>
<dbReference type="GO" id="GO:0019843">
    <property type="term" value="F:rRNA binding"/>
    <property type="evidence" value="ECO:0007669"/>
    <property type="project" value="UniProtKB-KW"/>
</dbReference>
<dbReference type="GO" id="GO:0006397">
    <property type="term" value="P:mRNA processing"/>
    <property type="evidence" value="ECO:0007669"/>
    <property type="project" value="UniProtKB-UniRule"/>
</dbReference>
<dbReference type="GO" id="GO:0010468">
    <property type="term" value="P:regulation of gene expression"/>
    <property type="evidence" value="ECO:0007669"/>
    <property type="project" value="TreeGrafter"/>
</dbReference>
<dbReference type="GO" id="GO:0006364">
    <property type="term" value="P:rRNA processing"/>
    <property type="evidence" value="ECO:0007669"/>
    <property type="project" value="UniProtKB-UniRule"/>
</dbReference>
<dbReference type="GO" id="GO:0008033">
    <property type="term" value="P:tRNA processing"/>
    <property type="evidence" value="ECO:0007669"/>
    <property type="project" value="UniProtKB-KW"/>
</dbReference>
<dbReference type="CDD" id="cd10845">
    <property type="entry name" value="DSRM_RNAse_III_family"/>
    <property type="match status" value="1"/>
</dbReference>
<dbReference type="CDD" id="cd00593">
    <property type="entry name" value="RIBOc"/>
    <property type="match status" value="1"/>
</dbReference>
<dbReference type="FunFam" id="1.10.1520.10:FF:000001">
    <property type="entry name" value="Ribonuclease 3"/>
    <property type="match status" value="1"/>
</dbReference>
<dbReference type="FunFam" id="3.30.160.20:FF:000003">
    <property type="entry name" value="Ribonuclease 3"/>
    <property type="match status" value="1"/>
</dbReference>
<dbReference type="Gene3D" id="3.30.160.20">
    <property type="match status" value="1"/>
</dbReference>
<dbReference type="Gene3D" id="1.10.1520.10">
    <property type="entry name" value="Ribonuclease III domain"/>
    <property type="match status" value="1"/>
</dbReference>
<dbReference type="HAMAP" id="MF_00104">
    <property type="entry name" value="RNase_III"/>
    <property type="match status" value="1"/>
</dbReference>
<dbReference type="InterPro" id="IPR014720">
    <property type="entry name" value="dsRBD_dom"/>
</dbReference>
<dbReference type="InterPro" id="IPR011907">
    <property type="entry name" value="RNase_III"/>
</dbReference>
<dbReference type="InterPro" id="IPR000999">
    <property type="entry name" value="RNase_III_dom"/>
</dbReference>
<dbReference type="InterPro" id="IPR036389">
    <property type="entry name" value="RNase_III_sf"/>
</dbReference>
<dbReference type="NCBIfam" id="TIGR02191">
    <property type="entry name" value="RNaseIII"/>
    <property type="match status" value="1"/>
</dbReference>
<dbReference type="PANTHER" id="PTHR11207:SF0">
    <property type="entry name" value="RIBONUCLEASE 3"/>
    <property type="match status" value="1"/>
</dbReference>
<dbReference type="PANTHER" id="PTHR11207">
    <property type="entry name" value="RIBONUCLEASE III"/>
    <property type="match status" value="1"/>
</dbReference>
<dbReference type="Pfam" id="PF00035">
    <property type="entry name" value="dsrm"/>
    <property type="match status" value="1"/>
</dbReference>
<dbReference type="Pfam" id="PF14622">
    <property type="entry name" value="Ribonucleas_3_3"/>
    <property type="match status" value="1"/>
</dbReference>
<dbReference type="SMART" id="SM00358">
    <property type="entry name" value="DSRM"/>
    <property type="match status" value="1"/>
</dbReference>
<dbReference type="SMART" id="SM00535">
    <property type="entry name" value="RIBOc"/>
    <property type="match status" value="1"/>
</dbReference>
<dbReference type="SUPFAM" id="SSF54768">
    <property type="entry name" value="dsRNA-binding domain-like"/>
    <property type="match status" value="1"/>
</dbReference>
<dbReference type="SUPFAM" id="SSF69065">
    <property type="entry name" value="RNase III domain-like"/>
    <property type="match status" value="1"/>
</dbReference>
<dbReference type="PROSITE" id="PS50137">
    <property type="entry name" value="DS_RBD"/>
    <property type="match status" value="1"/>
</dbReference>
<dbReference type="PROSITE" id="PS00517">
    <property type="entry name" value="RNASE_3_1"/>
    <property type="match status" value="1"/>
</dbReference>
<dbReference type="PROSITE" id="PS50142">
    <property type="entry name" value="RNASE_3_2"/>
    <property type="match status" value="1"/>
</dbReference>
<name>RNC_SHIB3</name>
<protein>
    <recommendedName>
        <fullName evidence="1">Ribonuclease 3</fullName>
        <ecNumber evidence="1">3.1.26.3</ecNumber>
    </recommendedName>
    <alternativeName>
        <fullName evidence="1">Ribonuclease III</fullName>
        <shortName evidence="1">RNase III</shortName>
    </alternativeName>
</protein>
<accession>B2TXY0</accession>
<reference key="1">
    <citation type="submission" date="2008-05" db="EMBL/GenBank/DDBJ databases">
        <title>Complete sequence of Shigella boydii serotype 18 strain BS512.</title>
        <authorList>
            <person name="Rasko D.A."/>
            <person name="Rosovitz M."/>
            <person name="Maurelli A.T."/>
            <person name="Myers G."/>
            <person name="Seshadri R."/>
            <person name="Cer R."/>
            <person name="Jiang L."/>
            <person name="Ravel J."/>
            <person name="Sebastian Y."/>
        </authorList>
    </citation>
    <scope>NUCLEOTIDE SEQUENCE [LARGE SCALE GENOMIC DNA]</scope>
    <source>
        <strain>CDC 3083-94 / BS512</strain>
    </source>
</reference>